<dbReference type="EC" id="3.1.27.-" evidence="4"/>
<dbReference type="EMBL" id="AF041066">
    <property type="protein sequence ID" value="AAC23487.1"/>
    <property type="molecule type" value="mRNA"/>
</dbReference>
<dbReference type="EMBL" id="BC070953">
    <property type="protein sequence ID" value="AAH70953.1"/>
    <property type="molecule type" value="mRNA"/>
</dbReference>
<dbReference type="RefSeq" id="NP_064467.1">
    <property type="nucleotide sequence ID" value="NM_020082.2"/>
</dbReference>
<dbReference type="RefSeq" id="XP_006251968.1">
    <property type="nucleotide sequence ID" value="XM_006251906.2"/>
</dbReference>
<dbReference type="RefSeq" id="XP_006251969.1">
    <property type="nucleotide sequence ID" value="XM_006251907.3"/>
</dbReference>
<dbReference type="RefSeq" id="XP_063130661.1">
    <property type="nucleotide sequence ID" value="XM_063274591.1"/>
</dbReference>
<dbReference type="RefSeq" id="XP_063130662.1">
    <property type="nucleotide sequence ID" value="XM_063274592.1"/>
</dbReference>
<dbReference type="SMR" id="O55004"/>
<dbReference type="FunCoup" id="O55004">
    <property type="interactions" value="115"/>
</dbReference>
<dbReference type="STRING" id="10116.ENSRNOP00000043003"/>
<dbReference type="jPOST" id="O55004"/>
<dbReference type="PaxDb" id="10116-ENSRNOP00000043003"/>
<dbReference type="Ensembl" id="ENSRNOT00000041495.5">
    <property type="protein sequence ID" value="ENSRNOP00000043003.2"/>
    <property type="gene ID" value="ENSRNOG00000025625.6"/>
</dbReference>
<dbReference type="Ensembl" id="ENSRNOT00000089631.2">
    <property type="protein sequence ID" value="ENSRNOP00000073131.2"/>
    <property type="gene ID" value="ENSRNOG00000025625.6"/>
</dbReference>
<dbReference type="GeneID" id="56759"/>
<dbReference type="KEGG" id="rno:56759"/>
<dbReference type="UCSC" id="RGD:61823">
    <property type="organism name" value="rat"/>
</dbReference>
<dbReference type="AGR" id="RGD:61823"/>
<dbReference type="CTD" id="6038"/>
<dbReference type="RGD" id="61823">
    <property type="gene designation" value="Rnase4"/>
</dbReference>
<dbReference type="eggNOG" id="ENOG502S9Q1">
    <property type="taxonomic scope" value="Eukaryota"/>
</dbReference>
<dbReference type="GeneTree" id="ENSGT00940000157645"/>
<dbReference type="HOGENOM" id="CLU_117006_3_1_1"/>
<dbReference type="InParanoid" id="O55004"/>
<dbReference type="OMA" id="ATSHHCK"/>
<dbReference type="OrthoDB" id="8573660at2759"/>
<dbReference type="PhylomeDB" id="O55004"/>
<dbReference type="TreeFam" id="TF333393"/>
<dbReference type="PRO" id="PR:O55004"/>
<dbReference type="Proteomes" id="UP000002494">
    <property type="component" value="Chromosome 15"/>
</dbReference>
<dbReference type="Bgee" id="ENSRNOG00000025625">
    <property type="expression patterns" value="Expressed in liver and 18 other cell types or tissues"/>
</dbReference>
<dbReference type="ExpressionAtlas" id="O55004">
    <property type="expression patterns" value="baseline and differential"/>
</dbReference>
<dbReference type="GO" id="GO:0005576">
    <property type="term" value="C:extracellular region"/>
    <property type="evidence" value="ECO:0000266"/>
    <property type="project" value="RGD"/>
</dbReference>
<dbReference type="GO" id="GO:0005615">
    <property type="term" value="C:extracellular space"/>
    <property type="evidence" value="ECO:0000250"/>
    <property type="project" value="UniProtKB"/>
</dbReference>
<dbReference type="GO" id="GO:0004519">
    <property type="term" value="F:endonuclease activity"/>
    <property type="evidence" value="ECO:0007669"/>
    <property type="project" value="UniProtKB-KW"/>
</dbReference>
<dbReference type="GO" id="GO:0003676">
    <property type="term" value="F:nucleic acid binding"/>
    <property type="evidence" value="ECO:0007669"/>
    <property type="project" value="InterPro"/>
</dbReference>
<dbReference type="GO" id="GO:0004540">
    <property type="term" value="F:RNA nuclease activity"/>
    <property type="evidence" value="ECO:0000266"/>
    <property type="project" value="RGD"/>
</dbReference>
<dbReference type="GO" id="GO:0019731">
    <property type="term" value="P:antibacterial humoral response"/>
    <property type="evidence" value="ECO:0000250"/>
    <property type="project" value="UniProtKB"/>
</dbReference>
<dbReference type="GO" id="GO:0009267">
    <property type="term" value="P:cellular response to starvation"/>
    <property type="evidence" value="ECO:0000266"/>
    <property type="project" value="RGD"/>
</dbReference>
<dbReference type="GO" id="GO:0050830">
    <property type="term" value="P:defense response to Gram-positive bacterium"/>
    <property type="evidence" value="ECO:0000318"/>
    <property type="project" value="GO_Central"/>
</dbReference>
<dbReference type="CDD" id="cd06265">
    <property type="entry name" value="RNase_A_canonical"/>
    <property type="match status" value="1"/>
</dbReference>
<dbReference type="FunFam" id="3.10.130.10:FF:000001">
    <property type="entry name" value="Ribonuclease pancreatic"/>
    <property type="match status" value="1"/>
</dbReference>
<dbReference type="Gene3D" id="3.10.130.10">
    <property type="entry name" value="Ribonuclease A-like domain"/>
    <property type="match status" value="1"/>
</dbReference>
<dbReference type="InterPro" id="IPR001427">
    <property type="entry name" value="RNaseA"/>
</dbReference>
<dbReference type="InterPro" id="IPR036816">
    <property type="entry name" value="RNaseA-like_dom_sf"/>
</dbReference>
<dbReference type="InterPro" id="IPR023411">
    <property type="entry name" value="RNaseA_AS"/>
</dbReference>
<dbReference type="InterPro" id="IPR023412">
    <property type="entry name" value="RNaseA_domain"/>
</dbReference>
<dbReference type="PANTHER" id="PTHR11437">
    <property type="entry name" value="RIBONUCLEASE"/>
    <property type="match status" value="1"/>
</dbReference>
<dbReference type="PANTHER" id="PTHR11437:SF53">
    <property type="entry name" value="RIBONUCLEASE 4"/>
    <property type="match status" value="1"/>
</dbReference>
<dbReference type="Pfam" id="PF00074">
    <property type="entry name" value="RnaseA"/>
    <property type="match status" value="1"/>
</dbReference>
<dbReference type="PRINTS" id="PR00794">
    <property type="entry name" value="RIBONUCLEASE"/>
</dbReference>
<dbReference type="SMART" id="SM00092">
    <property type="entry name" value="RNAse_Pc"/>
    <property type="match status" value="1"/>
</dbReference>
<dbReference type="SUPFAM" id="SSF54076">
    <property type="entry name" value="RNase A-like"/>
    <property type="match status" value="1"/>
</dbReference>
<dbReference type="PROSITE" id="PS00127">
    <property type="entry name" value="RNASE_PANCREATIC"/>
    <property type="match status" value="1"/>
</dbReference>
<comment type="function">
    <text evidence="4">Cleaves preferentially after uridine bases. Has antimicrobial activity against uropathogenic E.coli (UPEC). Probably contributes to urinary tract sterility.</text>
</comment>
<comment type="subcellular location">
    <subcellularLocation>
        <location evidence="4">Secreted</location>
    </subcellularLocation>
    <text evidence="4">Detected in urine.</text>
</comment>
<comment type="similarity">
    <text evidence="6">Belongs to the pancreatic ribonuclease family.</text>
</comment>
<name>RNAS4_RAT</name>
<feature type="signal peptide" evidence="1">
    <location>
        <begin position="1"/>
        <end position="28"/>
    </location>
</feature>
<feature type="chain" id="PRO_0000030887" description="Ribonuclease 4">
    <location>
        <begin position="29"/>
        <end position="147"/>
    </location>
</feature>
<feature type="active site" description="Proton acceptor" evidence="5">
    <location>
        <position position="40"/>
    </location>
</feature>
<feature type="active site" description="Proton donor" evidence="5">
    <location>
        <position position="144"/>
    </location>
</feature>
<feature type="binding site" evidence="3">
    <location>
        <position position="35"/>
    </location>
    <ligand>
        <name>dUMP</name>
        <dbReference type="ChEBI" id="CHEBI:246422"/>
    </ligand>
</feature>
<feature type="binding site" evidence="3">
    <location>
        <position position="40"/>
    </location>
    <ligand>
        <name>dUMP</name>
        <dbReference type="ChEBI" id="CHEBI:246422"/>
    </ligand>
</feature>
<feature type="binding site" evidence="3">
    <location>
        <position position="68"/>
    </location>
    <ligand>
        <name>dUMP</name>
        <dbReference type="ChEBI" id="CHEBI:246422"/>
    </ligand>
</feature>
<feature type="binding site" evidence="3">
    <location>
        <position position="71"/>
    </location>
    <ligand>
        <name>dUMP</name>
        <dbReference type="ChEBI" id="CHEBI:246422"/>
    </ligand>
</feature>
<feature type="binding site" evidence="3">
    <location>
        <position position="72"/>
    </location>
    <ligand>
        <name>dUMP</name>
        <dbReference type="ChEBI" id="CHEBI:246422"/>
    </ligand>
</feature>
<feature type="binding site" evidence="3">
    <location>
        <position position="145"/>
    </location>
    <ligand>
        <name>dUMP</name>
        <dbReference type="ChEBI" id="CHEBI:246422"/>
    </ligand>
</feature>
<feature type="modified residue" description="Pyrrolidone carboxylic acid" evidence="2">
    <location>
        <position position="29"/>
    </location>
</feature>
<feature type="disulfide bond" evidence="4">
    <location>
        <begin position="53"/>
        <end position="109"/>
    </location>
</feature>
<feature type="disulfide bond" evidence="4">
    <location>
        <begin position="67"/>
        <end position="120"/>
    </location>
</feature>
<feature type="disulfide bond" evidence="4">
    <location>
        <begin position="85"/>
        <end position="135"/>
    </location>
</feature>
<feature type="disulfide bond" evidence="4">
    <location>
        <begin position="92"/>
        <end position="99"/>
    </location>
</feature>
<sequence>MDIQRTQSLLLLLLLTLLGLGLVQPSYGQDRMYQRFLRQHVDPEGTGGSDNYCNVMMQRRRMTSTQCKRFNTFIHEDIWNIRSICDTANIPCKNGNMNCHEGIVRVTDCRETGSSVPHNCRYRARASTRRVVIACEGTPEVPVHFDR</sequence>
<organism>
    <name type="scientific">Rattus norvegicus</name>
    <name type="common">Rat</name>
    <dbReference type="NCBI Taxonomy" id="10116"/>
    <lineage>
        <taxon>Eukaryota</taxon>
        <taxon>Metazoa</taxon>
        <taxon>Chordata</taxon>
        <taxon>Craniata</taxon>
        <taxon>Vertebrata</taxon>
        <taxon>Euteleostomi</taxon>
        <taxon>Mammalia</taxon>
        <taxon>Eutheria</taxon>
        <taxon>Euarchontoglires</taxon>
        <taxon>Glires</taxon>
        <taxon>Rodentia</taxon>
        <taxon>Myomorpha</taxon>
        <taxon>Muroidea</taxon>
        <taxon>Muridae</taxon>
        <taxon>Murinae</taxon>
        <taxon>Rattus</taxon>
    </lineage>
</organism>
<reference key="1">
    <citation type="journal article" date="1998" name="Biochim. Biophys. Acta">
        <title>Ribonucleases from rat and bovine liver: purification, specificity and structural characterization.</title>
        <authorList>
            <person name="Zhao W."/>
            <person name="Kote-Jarai Z."/>
            <person name="van Santen Y."/>
            <person name="Hofsteenge J."/>
            <person name="Beintema J.J."/>
        </authorList>
    </citation>
    <scope>NUCLEOTIDE SEQUENCE [MRNA]</scope>
    <scope>PARTIAL PROTEIN SEQUENCE</scope>
</reference>
<reference key="2">
    <citation type="journal article" date="2004" name="Genome Res.">
        <title>The status, quality, and expansion of the NIH full-length cDNA project: the Mammalian Gene Collection (MGC).</title>
        <authorList>
            <consortium name="The MGC Project Team"/>
        </authorList>
    </citation>
    <scope>NUCLEOTIDE SEQUENCE [LARGE SCALE MRNA]</scope>
    <source>
        <tissue>Heart</tissue>
    </source>
</reference>
<accession>O55004</accession>
<proteinExistence type="evidence at protein level"/>
<keyword id="KW-0044">Antibiotic</keyword>
<keyword id="KW-0929">Antimicrobial</keyword>
<keyword id="KW-0903">Direct protein sequencing</keyword>
<keyword id="KW-1015">Disulfide bond</keyword>
<keyword id="KW-0255">Endonuclease</keyword>
<keyword id="KW-0378">Hydrolase</keyword>
<keyword id="KW-0540">Nuclease</keyword>
<keyword id="KW-0873">Pyrrolidone carboxylic acid</keyword>
<keyword id="KW-1185">Reference proteome</keyword>
<keyword id="KW-0964">Secreted</keyword>
<keyword id="KW-0732">Signal</keyword>
<evidence type="ECO:0000250" key="1"/>
<evidence type="ECO:0000250" key="2">
    <source>
        <dbReference type="UniProtKB" id="P15467"/>
    </source>
</evidence>
<evidence type="ECO:0000250" key="3">
    <source>
        <dbReference type="UniProtKB" id="P15468"/>
    </source>
</evidence>
<evidence type="ECO:0000250" key="4">
    <source>
        <dbReference type="UniProtKB" id="P34096"/>
    </source>
</evidence>
<evidence type="ECO:0000250" key="5">
    <source>
        <dbReference type="UniProtKB" id="Q9H1E1"/>
    </source>
</evidence>
<evidence type="ECO:0000305" key="6"/>
<protein>
    <recommendedName>
        <fullName>Ribonuclease 4</fullName>
        <shortName>RNase 4</shortName>
        <ecNumber evidence="4">3.1.27.-</ecNumber>
    </recommendedName>
    <alternativeName>
        <fullName>RL3</fullName>
    </alternativeName>
</protein>
<gene>
    <name type="primary">Rnase4</name>
</gene>